<protein>
    <recommendedName>
        <fullName evidence="1">Serine hydroxymethyltransferase</fullName>
        <shortName evidence="1">SHMT</shortName>
        <shortName evidence="1">Serine methylase</shortName>
        <ecNumber evidence="1">2.1.2.1</ecNumber>
    </recommendedName>
</protein>
<evidence type="ECO:0000255" key="1">
    <source>
        <dbReference type="HAMAP-Rule" id="MF_00051"/>
    </source>
</evidence>
<feature type="chain" id="PRO_1000091516" description="Serine hydroxymethyltransferase">
    <location>
        <begin position="1"/>
        <end position="426"/>
    </location>
</feature>
<feature type="binding site" evidence="1">
    <location>
        <position position="113"/>
    </location>
    <ligand>
        <name>(6S)-5,6,7,8-tetrahydrofolate</name>
        <dbReference type="ChEBI" id="CHEBI:57453"/>
    </ligand>
</feature>
<feature type="binding site" evidence="1">
    <location>
        <begin position="117"/>
        <end position="119"/>
    </location>
    <ligand>
        <name>(6S)-5,6,7,8-tetrahydrofolate</name>
        <dbReference type="ChEBI" id="CHEBI:57453"/>
    </ligand>
</feature>
<feature type="binding site" evidence="1">
    <location>
        <begin position="363"/>
        <end position="365"/>
    </location>
    <ligand>
        <name>(6S)-5,6,7,8-tetrahydrofolate</name>
        <dbReference type="ChEBI" id="CHEBI:57453"/>
    </ligand>
</feature>
<feature type="site" description="Plays an important role in substrate specificity" evidence="1">
    <location>
        <position position="221"/>
    </location>
</feature>
<feature type="modified residue" description="N6-(pyridoxal phosphate)lysine" evidence="1">
    <location>
        <position position="222"/>
    </location>
</feature>
<sequence length="426" mass="47218">MKKDELIFKLIEQENNRQCEGIELIASENFVSPQVLKAAGSILTNKYAEGYPRKRYYGGCQIVDEIEQTAIDRLKHLFHAEWVNVQPHSGAQANMTVFLACLQPGDYFLGLGLSHGGHLSHGSPVNFSGLSYKALEYGTEKENGKINYQQLEYVAMEKIPKLIIAGASAYSRDWDYQRIRLIADKIGAIFMVDMAHPAGLIAAQLLDNPLHYAHIVTSTTHKTLRGPRGGIILMGKDFENPWGRTTTKGKIKMMSEILDSALFPGVQGGPLEHIIAAKAIAFYEALQPEYVVYQKQVKKNAQVMAKALNSTGYKIVSGGTDNHLMLVDLRSKFPTLSGKQAEVALVSADITVNKNMVPFDNRSPFLTSGLRFGTPAITTRGAKEPLMEEIVELIDTVLSNVDNDKIVSSVKKKVNILMKDYPLFAW</sequence>
<organism>
    <name type="scientific">Azobacteroides pseudotrichonymphae genomovar. CFP2</name>
    <dbReference type="NCBI Taxonomy" id="511995"/>
    <lineage>
        <taxon>Bacteria</taxon>
        <taxon>Pseudomonadati</taxon>
        <taxon>Bacteroidota</taxon>
        <taxon>Bacteroidia</taxon>
        <taxon>Bacteroidales</taxon>
        <taxon>Candidatus Azobacteroides</taxon>
    </lineage>
</organism>
<proteinExistence type="inferred from homology"/>
<comment type="function">
    <text evidence="1">Catalyzes the reversible interconversion of serine and glycine with tetrahydrofolate (THF) serving as the one-carbon carrier. This reaction serves as the major source of one-carbon groups required for the biosynthesis of purines, thymidylate, methionine, and other important biomolecules. Also exhibits THF-independent aldolase activity toward beta-hydroxyamino acids, producing glycine and aldehydes, via a retro-aldol mechanism.</text>
</comment>
<comment type="catalytic activity">
    <reaction evidence="1">
        <text>(6R)-5,10-methylene-5,6,7,8-tetrahydrofolate + glycine + H2O = (6S)-5,6,7,8-tetrahydrofolate + L-serine</text>
        <dbReference type="Rhea" id="RHEA:15481"/>
        <dbReference type="ChEBI" id="CHEBI:15377"/>
        <dbReference type="ChEBI" id="CHEBI:15636"/>
        <dbReference type="ChEBI" id="CHEBI:33384"/>
        <dbReference type="ChEBI" id="CHEBI:57305"/>
        <dbReference type="ChEBI" id="CHEBI:57453"/>
        <dbReference type="EC" id="2.1.2.1"/>
    </reaction>
</comment>
<comment type="cofactor">
    <cofactor evidence="1">
        <name>pyridoxal 5'-phosphate</name>
        <dbReference type="ChEBI" id="CHEBI:597326"/>
    </cofactor>
</comment>
<comment type="pathway">
    <text evidence="1">One-carbon metabolism; tetrahydrofolate interconversion.</text>
</comment>
<comment type="pathway">
    <text evidence="1">Amino-acid biosynthesis; glycine biosynthesis; glycine from L-serine: step 1/1.</text>
</comment>
<comment type="subunit">
    <text evidence="1">Homodimer.</text>
</comment>
<comment type="subcellular location">
    <subcellularLocation>
        <location evidence="1">Cytoplasm</location>
    </subcellularLocation>
</comment>
<comment type="similarity">
    <text evidence="1">Belongs to the SHMT family.</text>
</comment>
<dbReference type="EC" id="2.1.2.1" evidence="1"/>
<dbReference type="EMBL" id="AP010656">
    <property type="protein sequence ID" value="BAG84015.1"/>
    <property type="molecule type" value="Genomic_DNA"/>
</dbReference>
<dbReference type="RefSeq" id="WP_012573771.1">
    <property type="nucleotide sequence ID" value="NC_011565.1"/>
</dbReference>
<dbReference type="SMR" id="B6YS43"/>
<dbReference type="STRING" id="511995.CFPG_752"/>
<dbReference type="KEGG" id="aps:CFPG_752"/>
<dbReference type="eggNOG" id="COG0112">
    <property type="taxonomic scope" value="Bacteria"/>
</dbReference>
<dbReference type="HOGENOM" id="CLU_022477_2_1_10"/>
<dbReference type="OrthoDB" id="9803846at2"/>
<dbReference type="UniPathway" id="UPA00193"/>
<dbReference type="UniPathway" id="UPA00288">
    <property type="reaction ID" value="UER01023"/>
</dbReference>
<dbReference type="Proteomes" id="UP000000723">
    <property type="component" value="Chromosome"/>
</dbReference>
<dbReference type="GO" id="GO:0005829">
    <property type="term" value="C:cytosol"/>
    <property type="evidence" value="ECO:0007669"/>
    <property type="project" value="TreeGrafter"/>
</dbReference>
<dbReference type="GO" id="GO:0004372">
    <property type="term" value="F:glycine hydroxymethyltransferase activity"/>
    <property type="evidence" value="ECO:0007669"/>
    <property type="project" value="UniProtKB-UniRule"/>
</dbReference>
<dbReference type="GO" id="GO:0030170">
    <property type="term" value="F:pyridoxal phosphate binding"/>
    <property type="evidence" value="ECO:0007669"/>
    <property type="project" value="UniProtKB-UniRule"/>
</dbReference>
<dbReference type="GO" id="GO:0019264">
    <property type="term" value="P:glycine biosynthetic process from serine"/>
    <property type="evidence" value="ECO:0007669"/>
    <property type="project" value="UniProtKB-UniRule"/>
</dbReference>
<dbReference type="GO" id="GO:0035999">
    <property type="term" value="P:tetrahydrofolate interconversion"/>
    <property type="evidence" value="ECO:0007669"/>
    <property type="project" value="UniProtKB-UniRule"/>
</dbReference>
<dbReference type="CDD" id="cd00378">
    <property type="entry name" value="SHMT"/>
    <property type="match status" value="1"/>
</dbReference>
<dbReference type="FunFam" id="3.40.640.10:FF:000001">
    <property type="entry name" value="Serine hydroxymethyltransferase"/>
    <property type="match status" value="1"/>
</dbReference>
<dbReference type="Gene3D" id="3.90.1150.10">
    <property type="entry name" value="Aspartate Aminotransferase, domain 1"/>
    <property type="match status" value="1"/>
</dbReference>
<dbReference type="Gene3D" id="3.40.640.10">
    <property type="entry name" value="Type I PLP-dependent aspartate aminotransferase-like (Major domain)"/>
    <property type="match status" value="1"/>
</dbReference>
<dbReference type="HAMAP" id="MF_00051">
    <property type="entry name" value="SHMT"/>
    <property type="match status" value="1"/>
</dbReference>
<dbReference type="InterPro" id="IPR015424">
    <property type="entry name" value="PyrdxlP-dep_Trfase"/>
</dbReference>
<dbReference type="InterPro" id="IPR015421">
    <property type="entry name" value="PyrdxlP-dep_Trfase_major"/>
</dbReference>
<dbReference type="InterPro" id="IPR015422">
    <property type="entry name" value="PyrdxlP-dep_Trfase_small"/>
</dbReference>
<dbReference type="InterPro" id="IPR001085">
    <property type="entry name" value="Ser_HO-MeTrfase"/>
</dbReference>
<dbReference type="InterPro" id="IPR049943">
    <property type="entry name" value="Ser_HO-MeTrfase-like"/>
</dbReference>
<dbReference type="InterPro" id="IPR019798">
    <property type="entry name" value="Ser_HO-MeTrfase_PLP_BS"/>
</dbReference>
<dbReference type="InterPro" id="IPR039429">
    <property type="entry name" value="SHMT-like_dom"/>
</dbReference>
<dbReference type="NCBIfam" id="NF000586">
    <property type="entry name" value="PRK00011.1"/>
    <property type="match status" value="1"/>
</dbReference>
<dbReference type="PANTHER" id="PTHR11680">
    <property type="entry name" value="SERINE HYDROXYMETHYLTRANSFERASE"/>
    <property type="match status" value="1"/>
</dbReference>
<dbReference type="PANTHER" id="PTHR11680:SF35">
    <property type="entry name" value="SERINE HYDROXYMETHYLTRANSFERASE 1"/>
    <property type="match status" value="1"/>
</dbReference>
<dbReference type="Pfam" id="PF00464">
    <property type="entry name" value="SHMT"/>
    <property type="match status" value="1"/>
</dbReference>
<dbReference type="PIRSF" id="PIRSF000412">
    <property type="entry name" value="SHMT"/>
    <property type="match status" value="1"/>
</dbReference>
<dbReference type="SUPFAM" id="SSF53383">
    <property type="entry name" value="PLP-dependent transferases"/>
    <property type="match status" value="1"/>
</dbReference>
<dbReference type="PROSITE" id="PS00096">
    <property type="entry name" value="SHMT"/>
    <property type="match status" value="1"/>
</dbReference>
<keyword id="KW-0028">Amino-acid biosynthesis</keyword>
<keyword id="KW-0963">Cytoplasm</keyword>
<keyword id="KW-0554">One-carbon metabolism</keyword>
<keyword id="KW-0663">Pyridoxal phosphate</keyword>
<keyword id="KW-1185">Reference proteome</keyword>
<keyword id="KW-0808">Transferase</keyword>
<gene>
    <name evidence="1" type="primary">glyA</name>
    <name type="ordered locus">CFPG_752</name>
</gene>
<reference key="1">
    <citation type="journal article" date="2008" name="Science">
        <title>Genome of an endosymbiont coupling N2 fixation to cellulolysis within RT protist cells in termite gut.</title>
        <authorList>
            <person name="Hongoh Y."/>
            <person name="Sharma V.K."/>
            <person name="Prakash T."/>
            <person name="Noda S."/>
            <person name="Toh H."/>
            <person name="Taylor T.D."/>
            <person name="Kudo T."/>
            <person name="Sakaki Y."/>
            <person name="Toyoda A."/>
            <person name="Hattori M."/>
            <person name="Ohkuma M."/>
        </authorList>
    </citation>
    <scope>NUCLEOTIDE SEQUENCE [LARGE SCALE GENOMIC DNA]</scope>
</reference>
<name>GLYA_AZOPC</name>
<accession>B6YS43</accession>